<feature type="chain" id="PRO_1000046198" description="Large ribosomal subunit protein uL11">
    <location>
        <begin position="1"/>
        <end position="141"/>
    </location>
</feature>
<protein>
    <recommendedName>
        <fullName evidence="1">Large ribosomal subunit protein uL11</fullName>
    </recommendedName>
    <alternativeName>
        <fullName evidence="2">50S ribosomal protein L11</fullName>
    </alternativeName>
</protein>
<comment type="function">
    <text evidence="1">Forms part of the ribosomal stalk which helps the ribosome interact with GTP-bound translation factors.</text>
</comment>
<comment type="subunit">
    <text evidence="1">Part of the ribosomal stalk of the 50S ribosomal subunit. Interacts with L10 and the large rRNA to form the base of the stalk. L10 forms an elongated spine to which L12 dimers bind in a sequential fashion forming a multimeric L10(L12)X complex.</text>
</comment>
<comment type="PTM">
    <text evidence="1">One or more lysine residues are methylated.</text>
</comment>
<comment type="similarity">
    <text evidence="1">Belongs to the universal ribosomal protein uL11 family.</text>
</comment>
<organism>
    <name type="scientific">Lactobacillus delbrueckii subsp. bulgaricus (strain ATCC BAA-365 / Lb-18)</name>
    <dbReference type="NCBI Taxonomy" id="321956"/>
    <lineage>
        <taxon>Bacteria</taxon>
        <taxon>Bacillati</taxon>
        <taxon>Bacillota</taxon>
        <taxon>Bacilli</taxon>
        <taxon>Lactobacillales</taxon>
        <taxon>Lactobacillaceae</taxon>
        <taxon>Lactobacillus</taxon>
    </lineage>
</organism>
<sequence length="141" mass="14788">MAKKVINVVKLQIPAGAATPAPPVGPALGQAGINIVGFTKDFNARTADQKGMIIPVVITVYEDRSFDFVTKTPPAPVLLKQAAGIQKASGEPNKNKVGSVTTAQVKEIAETKMKDLNAASIEAAMRMVEGTARSMGIEVKD</sequence>
<reference key="1">
    <citation type="journal article" date="2006" name="Proc. Natl. Acad. Sci. U.S.A.">
        <title>Comparative genomics of the lactic acid bacteria.</title>
        <authorList>
            <person name="Makarova K.S."/>
            <person name="Slesarev A."/>
            <person name="Wolf Y.I."/>
            <person name="Sorokin A."/>
            <person name="Mirkin B."/>
            <person name="Koonin E.V."/>
            <person name="Pavlov A."/>
            <person name="Pavlova N."/>
            <person name="Karamychev V."/>
            <person name="Polouchine N."/>
            <person name="Shakhova V."/>
            <person name="Grigoriev I."/>
            <person name="Lou Y."/>
            <person name="Rohksar D."/>
            <person name="Lucas S."/>
            <person name="Huang K."/>
            <person name="Goodstein D.M."/>
            <person name="Hawkins T."/>
            <person name="Plengvidhya V."/>
            <person name="Welker D."/>
            <person name="Hughes J."/>
            <person name="Goh Y."/>
            <person name="Benson A."/>
            <person name="Baldwin K."/>
            <person name="Lee J.-H."/>
            <person name="Diaz-Muniz I."/>
            <person name="Dosti B."/>
            <person name="Smeianov V."/>
            <person name="Wechter W."/>
            <person name="Barabote R."/>
            <person name="Lorca G."/>
            <person name="Altermann E."/>
            <person name="Barrangou R."/>
            <person name="Ganesan B."/>
            <person name="Xie Y."/>
            <person name="Rawsthorne H."/>
            <person name="Tamir D."/>
            <person name="Parker C."/>
            <person name="Breidt F."/>
            <person name="Broadbent J.R."/>
            <person name="Hutkins R."/>
            <person name="O'Sullivan D."/>
            <person name="Steele J."/>
            <person name="Unlu G."/>
            <person name="Saier M.H. Jr."/>
            <person name="Klaenhammer T."/>
            <person name="Richardson P."/>
            <person name="Kozyavkin S."/>
            <person name="Weimer B.C."/>
            <person name="Mills D.A."/>
        </authorList>
    </citation>
    <scope>NUCLEOTIDE SEQUENCE [LARGE SCALE GENOMIC DNA]</scope>
    <source>
        <strain>ATCC BAA-365 / Lb-18</strain>
    </source>
</reference>
<proteinExistence type="inferred from homology"/>
<dbReference type="EMBL" id="CP000412">
    <property type="protein sequence ID" value="ABJ59034.1"/>
    <property type="molecule type" value="Genomic_DNA"/>
</dbReference>
<dbReference type="RefSeq" id="WP_002876501.1">
    <property type="nucleotide sequence ID" value="NC_008529.1"/>
</dbReference>
<dbReference type="SMR" id="Q048T8"/>
<dbReference type="GeneID" id="69669440"/>
<dbReference type="KEGG" id="lbu:LBUL_1544"/>
<dbReference type="HOGENOM" id="CLU_074237_2_1_9"/>
<dbReference type="BioCyc" id="LDEL321956:LBUL_RS07270-MONOMER"/>
<dbReference type="GO" id="GO:0022625">
    <property type="term" value="C:cytosolic large ribosomal subunit"/>
    <property type="evidence" value="ECO:0007669"/>
    <property type="project" value="TreeGrafter"/>
</dbReference>
<dbReference type="GO" id="GO:0070180">
    <property type="term" value="F:large ribosomal subunit rRNA binding"/>
    <property type="evidence" value="ECO:0007669"/>
    <property type="project" value="UniProtKB-UniRule"/>
</dbReference>
<dbReference type="GO" id="GO:0003735">
    <property type="term" value="F:structural constituent of ribosome"/>
    <property type="evidence" value="ECO:0007669"/>
    <property type="project" value="InterPro"/>
</dbReference>
<dbReference type="GO" id="GO:0006412">
    <property type="term" value="P:translation"/>
    <property type="evidence" value="ECO:0007669"/>
    <property type="project" value="UniProtKB-UniRule"/>
</dbReference>
<dbReference type="CDD" id="cd00349">
    <property type="entry name" value="Ribosomal_L11"/>
    <property type="match status" value="1"/>
</dbReference>
<dbReference type="FunFam" id="1.10.10.250:FF:000001">
    <property type="entry name" value="50S ribosomal protein L11"/>
    <property type="match status" value="1"/>
</dbReference>
<dbReference type="FunFam" id="3.30.1550.10:FF:000001">
    <property type="entry name" value="50S ribosomal protein L11"/>
    <property type="match status" value="1"/>
</dbReference>
<dbReference type="Gene3D" id="1.10.10.250">
    <property type="entry name" value="Ribosomal protein L11, C-terminal domain"/>
    <property type="match status" value="1"/>
</dbReference>
<dbReference type="Gene3D" id="3.30.1550.10">
    <property type="entry name" value="Ribosomal protein L11/L12, N-terminal domain"/>
    <property type="match status" value="1"/>
</dbReference>
<dbReference type="HAMAP" id="MF_00736">
    <property type="entry name" value="Ribosomal_uL11"/>
    <property type="match status" value="1"/>
</dbReference>
<dbReference type="InterPro" id="IPR000911">
    <property type="entry name" value="Ribosomal_uL11"/>
</dbReference>
<dbReference type="InterPro" id="IPR006519">
    <property type="entry name" value="Ribosomal_uL11_bac-typ"/>
</dbReference>
<dbReference type="InterPro" id="IPR020783">
    <property type="entry name" value="Ribosomal_uL11_C"/>
</dbReference>
<dbReference type="InterPro" id="IPR036769">
    <property type="entry name" value="Ribosomal_uL11_C_sf"/>
</dbReference>
<dbReference type="InterPro" id="IPR020785">
    <property type="entry name" value="Ribosomal_uL11_CS"/>
</dbReference>
<dbReference type="InterPro" id="IPR020784">
    <property type="entry name" value="Ribosomal_uL11_N"/>
</dbReference>
<dbReference type="InterPro" id="IPR036796">
    <property type="entry name" value="Ribosomal_uL11_N_sf"/>
</dbReference>
<dbReference type="NCBIfam" id="TIGR01632">
    <property type="entry name" value="L11_bact"/>
    <property type="match status" value="1"/>
</dbReference>
<dbReference type="PANTHER" id="PTHR11661">
    <property type="entry name" value="60S RIBOSOMAL PROTEIN L12"/>
    <property type="match status" value="1"/>
</dbReference>
<dbReference type="PANTHER" id="PTHR11661:SF1">
    <property type="entry name" value="LARGE RIBOSOMAL SUBUNIT PROTEIN UL11M"/>
    <property type="match status" value="1"/>
</dbReference>
<dbReference type="Pfam" id="PF00298">
    <property type="entry name" value="Ribosomal_L11"/>
    <property type="match status" value="1"/>
</dbReference>
<dbReference type="Pfam" id="PF03946">
    <property type="entry name" value="Ribosomal_L11_N"/>
    <property type="match status" value="1"/>
</dbReference>
<dbReference type="SMART" id="SM00649">
    <property type="entry name" value="RL11"/>
    <property type="match status" value="1"/>
</dbReference>
<dbReference type="SUPFAM" id="SSF54747">
    <property type="entry name" value="Ribosomal L11/L12e N-terminal domain"/>
    <property type="match status" value="1"/>
</dbReference>
<dbReference type="SUPFAM" id="SSF46906">
    <property type="entry name" value="Ribosomal protein L11, C-terminal domain"/>
    <property type="match status" value="1"/>
</dbReference>
<dbReference type="PROSITE" id="PS00359">
    <property type="entry name" value="RIBOSOMAL_L11"/>
    <property type="match status" value="1"/>
</dbReference>
<name>RL11_LACDB</name>
<gene>
    <name evidence="1" type="primary">rplK</name>
    <name type="ordered locus">LBUL_1544</name>
</gene>
<keyword id="KW-0488">Methylation</keyword>
<keyword id="KW-0687">Ribonucleoprotein</keyword>
<keyword id="KW-0689">Ribosomal protein</keyword>
<keyword id="KW-0694">RNA-binding</keyword>
<keyword id="KW-0699">rRNA-binding</keyword>
<accession>Q048T8</accession>
<evidence type="ECO:0000255" key="1">
    <source>
        <dbReference type="HAMAP-Rule" id="MF_00736"/>
    </source>
</evidence>
<evidence type="ECO:0000305" key="2"/>